<name>ALR_ACIF2</name>
<dbReference type="EC" id="5.1.1.1" evidence="1"/>
<dbReference type="EMBL" id="CP001219">
    <property type="protein sequence ID" value="ACK79533.1"/>
    <property type="molecule type" value="Genomic_DNA"/>
</dbReference>
<dbReference type="RefSeq" id="WP_012537409.1">
    <property type="nucleotide sequence ID" value="NC_011761.1"/>
</dbReference>
<dbReference type="SMR" id="B7J911"/>
<dbReference type="STRING" id="243159.AFE_2818"/>
<dbReference type="PaxDb" id="243159-AFE_2818"/>
<dbReference type="GeneID" id="65281848"/>
<dbReference type="KEGG" id="afr:AFE_2818"/>
<dbReference type="eggNOG" id="COG0787">
    <property type="taxonomic scope" value="Bacteria"/>
</dbReference>
<dbReference type="HOGENOM" id="CLU_028393_1_0_6"/>
<dbReference type="UniPathway" id="UPA00042">
    <property type="reaction ID" value="UER00497"/>
</dbReference>
<dbReference type="Proteomes" id="UP000001362">
    <property type="component" value="Chromosome"/>
</dbReference>
<dbReference type="GO" id="GO:0005829">
    <property type="term" value="C:cytosol"/>
    <property type="evidence" value="ECO:0007669"/>
    <property type="project" value="TreeGrafter"/>
</dbReference>
<dbReference type="GO" id="GO:0008784">
    <property type="term" value="F:alanine racemase activity"/>
    <property type="evidence" value="ECO:0007669"/>
    <property type="project" value="UniProtKB-UniRule"/>
</dbReference>
<dbReference type="GO" id="GO:0030170">
    <property type="term" value="F:pyridoxal phosphate binding"/>
    <property type="evidence" value="ECO:0007669"/>
    <property type="project" value="UniProtKB-UniRule"/>
</dbReference>
<dbReference type="GO" id="GO:0030632">
    <property type="term" value="P:D-alanine biosynthetic process"/>
    <property type="evidence" value="ECO:0007669"/>
    <property type="project" value="UniProtKB-UniRule"/>
</dbReference>
<dbReference type="CDD" id="cd06827">
    <property type="entry name" value="PLPDE_III_AR_proteobact"/>
    <property type="match status" value="1"/>
</dbReference>
<dbReference type="FunFam" id="3.20.20.10:FF:000002">
    <property type="entry name" value="Alanine racemase"/>
    <property type="match status" value="1"/>
</dbReference>
<dbReference type="Gene3D" id="3.20.20.10">
    <property type="entry name" value="Alanine racemase"/>
    <property type="match status" value="1"/>
</dbReference>
<dbReference type="Gene3D" id="2.40.37.10">
    <property type="entry name" value="Lyase, Ornithine Decarboxylase, Chain A, domain 1"/>
    <property type="match status" value="1"/>
</dbReference>
<dbReference type="HAMAP" id="MF_01201">
    <property type="entry name" value="Ala_racemase"/>
    <property type="match status" value="1"/>
</dbReference>
<dbReference type="InterPro" id="IPR000821">
    <property type="entry name" value="Ala_racemase"/>
</dbReference>
<dbReference type="InterPro" id="IPR009006">
    <property type="entry name" value="Ala_racemase/Decarboxylase_C"/>
</dbReference>
<dbReference type="InterPro" id="IPR011079">
    <property type="entry name" value="Ala_racemase_C"/>
</dbReference>
<dbReference type="InterPro" id="IPR001608">
    <property type="entry name" value="Ala_racemase_N"/>
</dbReference>
<dbReference type="InterPro" id="IPR020622">
    <property type="entry name" value="Ala_racemase_pyridoxalP-BS"/>
</dbReference>
<dbReference type="InterPro" id="IPR029066">
    <property type="entry name" value="PLP-binding_barrel"/>
</dbReference>
<dbReference type="NCBIfam" id="TIGR00492">
    <property type="entry name" value="alr"/>
    <property type="match status" value="1"/>
</dbReference>
<dbReference type="PANTHER" id="PTHR30511">
    <property type="entry name" value="ALANINE RACEMASE"/>
    <property type="match status" value="1"/>
</dbReference>
<dbReference type="PANTHER" id="PTHR30511:SF0">
    <property type="entry name" value="ALANINE RACEMASE, CATABOLIC-RELATED"/>
    <property type="match status" value="1"/>
</dbReference>
<dbReference type="Pfam" id="PF00842">
    <property type="entry name" value="Ala_racemase_C"/>
    <property type="match status" value="1"/>
</dbReference>
<dbReference type="Pfam" id="PF01168">
    <property type="entry name" value="Ala_racemase_N"/>
    <property type="match status" value="1"/>
</dbReference>
<dbReference type="PRINTS" id="PR00992">
    <property type="entry name" value="ALARACEMASE"/>
</dbReference>
<dbReference type="SMART" id="SM01005">
    <property type="entry name" value="Ala_racemase_C"/>
    <property type="match status" value="1"/>
</dbReference>
<dbReference type="SUPFAM" id="SSF50621">
    <property type="entry name" value="Alanine racemase C-terminal domain-like"/>
    <property type="match status" value="1"/>
</dbReference>
<dbReference type="SUPFAM" id="SSF51419">
    <property type="entry name" value="PLP-binding barrel"/>
    <property type="match status" value="1"/>
</dbReference>
<dbReference type="PROSITE" id="PS00395">
    <property type="entry name" value="ALANINE_RACEMASE"/>
    <property type="match status" value="1"/>
</dbReference>
<accession>B7J911</accession>
<comment type="function">
    <text evidence="1">Catalyzes the interconversion of L-alanine and D-alanine. May also act on other amino acids.</text>
</comment>
<comment type="catalytic activity">
    <reaction evidence="1">
        <text>L-alanine = D-alanine</text>
        <dbReference type="Rhea" id="RHEA:20249"/>
        <dbReference type="ChEBI" id="CHEBI:57416"/>
        <dbReference type="ChEBI" id="CHEBI:57972"/>
        <dbReference type="EC" id="5.1.1.1"/>
    </reaction>
</comment>
<comment type="cofactor">
    <cofactor evidence="1">
        <name>pyridoxal 5'-phosphate</name>
        <dbReference type="ChEBI" id="CHEBI:597326"/>
    </cofactor>
</comment>
<comment type="pathway">
    <text evidence="1">Amino-acid biosynthesis; D-alanine biosynthesis; D-alanine from L-alanine: step 1/1.</text>
</comment>
<comment type="similarity">
    <text evidence="1">Belongs to the alanine racemase family.</text>
</comment>
<gene>
    <name type="primary">alr</name>
    <name type="ordered locus">AFE_2818</name>
</gene>
<feature type="chain" id="PRO_1000164588" description="Alanine racemase">
    <location>
        <begin position="1"/>
        <end position="364"/>
    </location>
</feature>
<feature type="active site" description="Proton acceptor; specific for D-alanine" evidence="1">
    <location>
        <position position="35"/>
    </location>
</feature>
<feature type="active site" description="Proton acceptor; specific for L-alanine" evidence="1">
    <location>
        <position position="260"/>
    </location>
</feature>
<feature type="binding site" evidence="1">
    <location>
        <position position="132"/>
    </location>
    <ligand>
        <name>substrate</name>
    </ligand>
</feature>
<feature type="binding site" evidence="1">
    <location>
        <position position="308"/>
    </location>
    <ligand>
        <name>substrate</name>
    </ligand>
</feature>
<feature type="modified residue" description="N6-(pyridoxal phosphate)lysine" evidence="1">
    <location>
        <position position="35"/>
    </location>
</feature>
<protein>
    <recommendedName>
        <fullName evidence="1">Alanine racemase</fullName>
        <ecNumber evidence="1">5.1.1.1</ecNumber>
    </recommendedName>
</protein>
<organism>
    <name type="scientific">Acidithiobacillus ferrooxidans (strain ATCC 23270 / DSM 14882 / CIP 104768 / NCIMB 8455)</name>
    <name type="common">Ferrobacillus ferrooxidans (strain ATCC 23270)</name>
    <dbReference type="NCBI Taxonomy" id="243159"/>
    <lineage>
        <taxon>Bacteria</taxon>
        <taxon>Pseudomonadati</taxon>
        <taxon>Pseudomonadota</taxon>
        <taxon>Acidithiobacillia</taxon>
        <taxon>Acidithiobacillales</taxon>
        <taxon>Acidithiobacillaceae</taxon>
        <taxon>Acidithiobacillus</taxon>
    </lineage>
</organism>
<proteinExistence type="inferred from homology"/>
<sequence>MTRPIVADISAAALRHNVAVVREHAPRARIMAAVKANAYGHGVTLCAPVLAEAGVDAFAVASLEEAEALHALGLERPICLLGGPFDADEVSVAAERAYLLVIHEQRQLQWLETRAADAALRLFIKVDTGMHRLGFAPERLPALFAALQRHPRWEVLGLMSHLARSDTPDDPFNRQQAGVFADAIAHVGHVTAGQHSLANSGGVLALPFTHQYWVRPGLMLYGLSPFAGRRGSEIGLQPVLSWRSAVVAIRELGPGDWLGYGAAWQAPARCRVGVVAAGYGDGYPRHLGCGAPVTVAGQTTRTLARVSMDMLFVDLTAVEADIGAPVVLMGAGGPPLESLAAELGTISYEMSCRMQMRVPRRLVS</sequence>
<keyword id="KW-0413">Isomerase</keyword>
<keyword id="KW-0663">Pyridoxal phosphate</keyword>
<keyword id="KW-1185">Reference proteome</keyword>
<reference key="1">
    <citation type="journal article" date="2008" name="BMC Genomics">
        <title>Acidithiobacillus ferrooxidans metabolism: from genome sequence to industrial applications.</title>
        <authorList>
            <person name="Valdes J."/>
            <person name="Pedroso I."/>
            <person name="Quatrini R."/>
            <person name="Dodson R.J."/>
            <person name="Tettelin H."/>
            <person name="Blake R. II"/>
            <person name="Eisen J.A."/>
            <person name="Holmes D.S."/>
        </authorList>
    </citation>
    <scope>NUCLEOTIDE SEQUENCE [LARGE SCALE GENOMIC DNA]</scope>
    <source>
        <strain>ATCC 23270 / DSM 14882 / CIP 104768 / NCIMB 8455</strain>
    </source>
</reference>
<evidence type="ECO:0000255" key="1">
    <source>
        <dbReference type="HAMAP-Rule" id="MF_01201"/>
    </source>
</evidence>